<comment type="function">
    <text evidence="1">Involved in the binding and/or turnover of quinones at the Q(B) site of photosystem II (PSII). PSII is a light-driven water plastoquinone oxidoreductase, using light energy to abstract electrons from H(2)O, generating a proton gradient subsequently used for ATP formation.</text>
</comment>
<comment type="subunit">
    <text evidence="1">PSII is composed of 1 copy each of membrane proteins PsbA, PsbB, PsbC, PsbD, PsbE, PsbF, PsbH, PsbI, PsbJ, PsbK, PsbL, PsbM, PsbT, PsbX, PsbY, PsbZ, Psb30/Ycf12, peripheral proteins PsbO, CyanoQ (PsbQ), PsbU, PsbV and a large number of cofactors. It forms dimeric complexes.</text>
</comment>
<comment type="subcellular location">
    <subcellularLocation>
        <location evidence="1">Cellular thylakoid membrane</location>
        <topology evidence="1">Single-pass membrane protein</topology>
    </subcellularLocation>
</comment>
<comment type="similarity">
    <text evidence="1">Belongs to the PsbX family. Type 1 subfamily.</text>
</comment>
<feature type="chain" id="PRO_0000345362" description="Photosystem II reaction center protein X">
    <location>
        <begin position="1"/>
        <end position="40"/>
    </location>
</feature>
<feature type="transmembrane region" description="Helical" evidence="1">
    <location>
        <begin position="10"/>
        <end position="30"/>
    </location>
</feature>
<feature type="helix" evidence="2">
    <location>
        <begin position="5"/>
        <end position="34"/>
    </location>
</feature>
<reference key="1">
    <citation type="journal article" date="2008" name="Proc. Natl. Acad. Sci. U.S.A.">
        <title>Niche adaptation and genome expansion in the chlorophyll d-producing cyanobacterium Acaryochloris marina.</title>
        <authorList>
            <person name="Swingley W.D."/>
            <person name="Chen M."/>
            <person name="Cheung P.C."/>
            <person name="Conrad A.L."/>
            <person name="Dejesa L.C."/>
            <person name="Hao J."/>
            <person name="Honchak B.M."/>
            <person name="Karbach L.E."/>
            <person name="Kurdoglu A."/>
            <person name="Lahiri S."/>
            <person name="Mastrian S.D."/>
            <person name="Miyashita H."/>
            <person name="Page L."/>
            <person name="Ramakrishna P."/>
            <person name="Satoh S."/>
            <person name="Sattley W.M."/>
            <person name="Shimada Y."/>
            <person name="Taylor H.L."/>
            <person name="Tomo T."/>
            <person name="Tsuchiya T."/>
            <person name="Wang Z.T."/>
            <person name="Raymond J."/>
            <person name="Mimuro M."/>
            <person name="Blankenship R.E."/>
            <person name="Touchman J.W."/>
        </authorList>
    </citation>
    <scope>NUCLEOTIDE SEQUENCE [LARGE SCALE GENOMIC DNA]</scope>
    <source>
        <strain>MBIC 11017</strain>
    </source>
</reference>
<accession>B0BYW9</accession>
<organism>
    <name type="scientific">Acaryochloris marina (strain MBIC 11017)</name>
    <dbReference type="NCBI Taxonomy" id="329726"/>
    <lineage>
        <taxon>Bacteria</taxon>
        <taxon>Bacillati</taxon>
        <taxon>Cyanobacteriota</taxon>
        <taxon>Cyanophyceae</taxon>
        <taxon>Acaryochloridales</taxon>
        <taxon>Acaryochloridaceae</taxon>
        <taxon>Acaryochloris</taxon>
    </lineage>
</organism>
<dbReference type="EMBL" id="CP000828">
    <property type="protein sequence ID" value="ABW27135.1"/>
    <property type="molecule type" value="Genomic_DNA"/>
</dbReference>
<dbReference type="RefSeq" id="WP_010477420.1">
    <property type="nucleotide sequence ID" value="NC_009925.1"/>
</dbReference>
<dbReference type="PDB" id="7YMI">
    <property type="method" value="EM"/>
    <property type="resolution" value="3.30 A"/>
    <property type="chains" value="X/x=1-40"/>
</dbReference>
<dbReference type="PDB" id="7YMM">
    <property type="method" value="EM"/>
    <property type="resolution" value="3.60 A"/>
    <property type="chains" value="1X/2X/3X/4X=1-40"/>
</dbReference>
<dbReference type="PDBsum" id="7YMI"/>
<dbReference type="PDBsum" id="7YMM"/>
<dbReference type="EMDB" id="EMD-33929"/>
<dbReference type="EMDB" id="EMD-33933"/>
<dbReference type="SMR" id="B0BYW9"/>
<dbReference type="STRING" id="329726.AM1_2120"/>
<dbReference type="KEGG" id="amr:AM1_2120"/>
<dbReference type="HOGENOM" id="CLU_212837_0_1_3"/>
<dbReference type="Proteomes" id="UP000000268">
    <property type="component" value="Chromosome"/>
</dbReference>
<dbReference type="GO" id="GO:0009523">
    <property type="term" value="C:photosystem II"/>
    <property type="evidence" value="ECO:0007669"/>
    <property type="project" value="UniProtKB-KW"/>
</dbReference>
<dbReference type="GO" id="GO:0031676">
    <property type="term" value="C:plasma membrane-derived thylakoid membrane"/>
    <property type="evidence" value="ECO:0007669"/>
    <property type="project" value="UniProtKB-SubCell"/>
</dbReference>
<dbReference type="GO" id="GO:0015979">
    <property type="term" value="P:photosynthesis"/>
    <property type="evidence" value="ECO:0007669"/>
    <property type="project" value="UniProtKB-UniRule"/>
</dbReference>
<dbReference type="Gene3D" id="1.20.5.510">
    <property type="entry name" value="Single helix bin"/>
    <property type="match status" value="1"/>
</dbReference>
<dbReference type="HAMAP" id="MF_01386">
    <property type="entry name" value="PSII_PsbX_1"/>
    <property type="match status" value="1"/>
</dbReference>
<dbReference type="InterPro" id="IPR009518">
    <property type="entry name" value="PSII_PsbX"/>
</dbReference>
<dbReference type="InterPro" id="IPR023431">
    <property type="entry name" value="PSII_PsbX_type_1_subfam"/>
</dbReference>
<dbReference type="Pfam" id="PF06596">
    <property type="entry name" value="PsbX"/>
    <property type="match status" value="1"/>
</dbReference>
<name>PSBX_ACAM1</name>
<gene>
    <name evidence="1" type="primary">psbX</name>
    <name type="ordered locus">AM1_2120</name>
</gene>
<keyword id="KW-0002">3D-structure</keyword>
<keyword id="KW-0472">Membrane</keyword>
<keyword id="KW-0602">Photosynthesis</keyword>
<keyword id="KW-0604">Photosystem II</keyword>
<keyword id="KW-1185">Reference proteome</keyword>
<keyword id="KW-0793">Thylakoid</keyword>
<keyword id="KW-0812">Transmembrane</keyword>
<keyword id="KW-1133">Transmembrane helix</keyword>
<evidence type="ECO:0000255" key="1">
    <source>
        <dbReference type="HAMAP-Rule" id="MF_01386"/>
    </source>
</evidence>
<evidence type="ECO:0007829" key="2">
    <source>
        <dbReference type="PDB" id="7YMI"/>
    </source>
</evidence>
<sequence>MTITPSLQGFFYSILFGAIVLGLLGGGFIFFSQKDKIVRR</sequence>
<protein>
    <recommendedName>
        <fullName evidence="1">Photosystem II reaction center protein X</fullName>
    </recommendedName>
</protein>
<proteinExistence type="evidence at protein level"/>